<reference key="1">
    <citation type="journal article" date="2007" name="Proc. Natl. Acad. Sci. U.S.A.">
        <title>Independent sorting-out of thousands of duplicated gene pairs in two yeast species descended from a whole-genome duplication.</title>
        <authorList>
            <person name="Scannell D.R."/>
            <person name="Frank A.C."/>
            <person name="Conant G.C."/>
            <person name="Byrne K.P."/>
            <person name="Woolfit M."/>
            <person name="Wolfe K.H."/>
        </authorList>
    </citation>
    <scope>NUCLEOTIDE SEQUENCE [LARGE SCALE GENOMIC DNA]</scope>
    <source>
        <strain>ATCC 22028 / DSM 70294 / BCRC 21397 / CBS 2163 / NBRC 10782 / NRRL Y-8283 / UCD 57-17</strain>
    </source>
</reference>
<feature type="chain" id="PRO_0000357324" description="Very-long-chain 3-oxoacyl-CoA reductase">
    <location>
        <begin position="1"/>
        <end position="347"/>
    </location>
</feature>
<feature type="transmembrane region" description="Helical" evidence="4">
    <location>
        <begin position="22"/>
        <end position="42"/>
    </location>
</feature>
<feature type="active site" description="Proton donor" evidence="2">
    <location>
        <position position="223"/>
    </location>
</feature>
<feature type="active site" description="Lowers pKa of active site Tyr" evidence="2">
    <location>
        <position position="227"/>
    </location>
</feature>
<feature type="binding site" evidence="1">
    <location>
        <position position="68"/>
    </location>
    <ligand>
        <name>NADP(+)</name>
        <dbReference type="ChEBI" id="CHEBI:58349"/>
    </ligand>
</feature>
<feature type="binding site" evidence="1">
    <location>
        <position position="122"/>
    </location>
    <ligand>
        <name>NADP(+)</name>
        <dbReference type="ChEBI" id="CHEBI:58349"/>
    </ligand>
</feature>
<feature type="binding site" evidence="2">
    <location>
        <position position="149"/>
    </location>
    <ligand>
        <name>NADP(+)</name>
        <dbReference type="ChEBI" id="CHEBI:58349"/>
    </ligand>
</feature>
<feature type="binding site" evidence="2">
    <location>
        <position position="223"/>
    </location>
    <ligand>
        <name>NADP(+)</name>
        <dbReference type="ChEBI" id="CHEBI:58349"/>
    </ligand>
</feature>
<feature type="binding site" evidence="2">
    <location>
        <position position="227"/>
    </location>
    <ligand>
        <name>NADP(+)</name>
        <dbReference type="ChEBI" id="CHEBI:58349"/>
    </ligand>
</feature>
<feature type="binding site" evidence="2">
    <location>
        <position position="256"/>
    </location>
    <ligand>
        <name>NADP(+)</name>
        <dbReference type="ChEBI" id="CHEBI:58349"/>
    </ligand>
</feature>
<feature type="binding site" evidence="1">
    <location>
        <position position="258"/>
    </location>
    <ligand>
        <name>NADP(+)</name>
        <dbReference type="ChEBI" id="CHEBI:58349"/>
    </ligand>
</feature>
<accession>A7TMJ2</accession>
<gene>
    <name type="ORF">Kpol_513p6</name>
</gene>
<sequence length="347" mass="38665">MLDSFMTQLEIVGNRSKCVNMLLWSIFGFGVLKATTLILRIMACFVDLFVLPPVNYSKYGSKNGNYCVITGASDGIGKEFAFQMAKRGFNLILISRTLSKLETLQKEISTKYNVKVEVLAIDVAKDSEDNYSAIKELCGKFPITALINNVGQSHSIPVPFLETDEDEMRRIITINNTATLMITQIIAPMIIKTTKESSKKTRGLILTMGSFGGLIPTPLLATYSGSKAFLQSWSSSLAGELKEHNVDVELIISYLVTSSMSKIRKTSMMIPNPKTFVASTLRNIGRRCGAQERYATITPYWSHALYQLAIVEAVGVYSHLVNYINYVFHKSIRIRALKKAARDAKKQ</sequence>
<evidence type="ECO:0000250" key="1">
    <source>
        <dbReference type="UniProtKB" id="L0E2Z4"/>
    </source>
</evidence>
<evidence type="ECO:0000250" key="2">
    <source>
        <dbReference type="UniProtKB" id="O93868"/>
    </source>
</evidence>
<evidence type="ECO:0000250" key="3">
    <source>
        <dbReference type="UniProtKB" id="P38286"/>
    </source>
</evidence>
<evidence type="ECO:0000255" key="4">
    <source>
        <dbReference type="HAMAP-Rule" id="MF_03107"/>
    </source>
</evidence>
<proteinExistence type="inferred from homology"/>
<organism>
    <name type="scientific">Vanderwaltozyma polyspora (strain ATCC 22028 / DSM 70294 / BCRC 21397 / CBS 2163 / NBRC 10782 / NRRL Y-8283 / UCD 57-17)</name>
    <name type="common">Kluyveromyces polysporus</name>
    <dbReference type="NCBI Taxonomy" id="436907"/>
    <lineage>
        <taxon>Eukaryota</taxon>
        <taxon>Fungi</taxon>
        <taxon>Dikarya</taxon>
        <taxon>Ascomycota</taxon>
        <taxon>Saccharomycotina</taxon>
        <taxon>Saccharomycetes</taxon>
        <taxon>Saccharomycetales</taxon>
        <taxon>Saccharomycetaceae</taxon>
        <taxon>Vanderwaltozyma</taxon>
    </lineage>
</organism>
<dbReference type="EC" id="1.1.1.330" evidence="4"/>
<dbReference type="EMBL" id="DS480423">
    <property type="protein sequence ID" value="EDO16490.1"/>
    <property type="molecule type" value="Genomic_DNA"/>
</dbReference>
<dbReference type="RefSeq" id="XP_001644348.1">
    <property type="nucleotide sequence ID" value="XM_001644298.1"/>
</dbReference>
<dbReference type="SMR" id="A7TMJ2"/>
<dbReference type="FunCoup" id="A7TMJ2">
    <property type="interactions" value="708"/>
</dbReference>
<dbReference type="STRING" id="436907.A7TMJ2"/>
<dbReference type="GeneID" id="5544659"/>
<dbReference type="KEGG" id="vpo:Kpol_513p6"/>
<dbReference type="eggNOG" id="KOG1014">
    <property type="taxonomic scope" value="Eukaryota"/>
</dbReference>
<dbReference type="HOGENOM" id="CLU_010194_38_0_1"/>
<dbReference type="InParanoid" id="A7TMJ2"/>
<dbReference type="OMA" id="LVAPGMM"/>
<dbReference type="OrthoDB" id="5545019at2759"/>
<dbReference type="PhylomeDB" id="A7TMJ2"/>
<dbReference type="UniPathway" id="UPA00094"/>
<dbReference type="Proteomes" id="UP000000267">
    <property type="component" value="Unassembled WGS sequence"/>
</dbReference>
<dbReference type="GO" id="GO:0005789">
    <property type="term" value="C:endoplasmic reticulum membrane"/>
    <property type="evidence" value="ECO:0007669"/>
    <property type="project" value="UniProtKB-SubCell"/>
</dbReference>
<dbReference type="GO" id="GO:0045703">
    <property type="term" value="F:ketoreductase activity"/>
    <property type="evidence" value="ECO:0007669"/>
    <property type="project" value="UniProtKB-UniRule"/>
</dbReference>
<dbReference type="GO" id="GO:0141040">
    <property type="term" value="F:very-long-chain 3-oxoacyl-CoA reductase activity"/>
    <property type="evidence" value="ECO:0007669"/>
    <property type="project" value="UniProtKB-EC"/>
</dbReference>
<dbReference type="GO" id="GO:0030497">
    <property type="term" value="P:fatty acid elongation"/>
    <property type="evidence" value="ECO:0007669"/>
    <property type="project" value="UniProtKB-UniRule"/>
</dbReference>
<dbReference type="GO" id="GO:0030148">
    <property type="term" value="P:sphingolipid biosynthetic process"/>
    <property type="evidence" value="ECO:0007669"/>
    <property type="project" value="EnsemblFungi"/>
</dbReference>
<dbReference type="GO" id="GO:0042761">
    <property type="term" value="P:very long-chain fatty acid biosynthetic process"/>
    <property type="evidence" value="ECO:0007669"/>
    <property type="project" value="EnsemblFungi"/>
</dbReference>
<dbReference type="CDD" id="cd05356">
    <property type="entry name" value="17beta-HSD1_like_SDR_c"/>
    <property type="match status" value="1"/>
</dbReference>
<dbReference type="FunFam" id="3.40.50.720:FF:000317">
    <property type="entry name" value="Very-long-chain 3-oxoacyl-CoA reductase"/>
    <property type="match status" value="1"/>
</dbReference>
<dbReference type="Gene3D" id="3.40.50.720">
    <property type="entry name" value="NAD(P)-binding Rossmann-like Domain"/>
    <property type="match status" value="1"/>
</dbReference>
<dbReference type="HAMAP" id="MF_03107">
    <property type="entry name" value="3_ketoreductase"/>
    <property type="match status" value="1"/>
</dbReference>
<dbReference type="InterPro" id="IPR027533">
    <property type="entry name" value="3_ketoreductase_fungal"/>
</dbReference>
<dbReference type="InterPro" id="IPR036291">
    <property type="entry name" value="NAD(P)-bd_dom_sf"/>
</dbReference>
<dbReference type="InterPro" id="IPR020904">
    <property type="entry name" value="Sc_DH/Rdtase_CS"/>
</dbReference>
<dbReference type="InterPro" id="IPR002347">
    <property type="entry name" value="SDR_fam"/>
</dbReference>
<dbReference type="PANTHER" id="PTHR43086:SF2">
    <property type="entry name" value="HYDROXYSTEROID DEHYDROGENASE-LIKE PROTEIN 1"/>
    <property type="match status" value="1"/>
</dbReference>
<dbReference type="PANTHER" id="PTHR43086">
    <property type="entry name" value="VERY-LONG-CHAIN 3-OXOOACYL-COA REDUCTASE"/>
    <property type="match status" value="1"/>
</dbReference>
<dbReference type="Pfam" id="PF00106">
    <property type="entry name" value="adh_short"/>
    <property type="match status" value="1"/>
</dbReference>
<dbReference type="PIRSF" id="PIRSF000126">
    <property type="entry name" value="11-beta-HSD1"/>
    <property type="match status" value="1"/>
</dbReference>
<dbReference type="PRINTS" id="PR00081">
    <property type="entry name" value="GDHRDH"/>
</dbReference>
<dbReference type="SUPFAM" id="SSF51735">
    <property type="entry name" value="NAD(P)-binding Rossmann-fold domains"/>
    <property type="match status" value="1"/>
</dbReference>
<dbReference type="PROSITE" id="PS00061">
    <property type="entry name" value="ADH_SHORT"/>
    <property type="match status" value="1"/>
</dbReference>
<keyword id="KW-0256">Endoplasmic reticulum</keyword>
<keyword id="KW-0275">Fatty acid biosynthesis</keyword>
<keyword id="KW-0276">Fatty acid metabolism</keyword>
<keyword id="KW-0444">Lipid biosynthesis</keyword>
<keyword id="KW-0443">Lipid metabolism</keyword>
<keyword id="KW-0472">Membrane</keyword>
<keyword id="KW-0521">NADP</keyword>
<keyword id="KW-0560">Oxidoreductase</keyword>
<keyword id="KW-1185">Reference proteome</keyword>
<keyword id="KW-0812">Transmembrane</keyword>
<keyword id="KW-1133">Transmembrane helix</keyword>
<name>MKAR_VANPO</name>
<protein>
    <recommendedName>
        <fullName evidence="4">Very-long-chain 3-oxoacyl-CoA reductase</fullName>
        <ecNumber evidence="4">1.1.1.330</ecNumber>
    </recommendedName>
    <alternativeName>
        <fullName evidence="4">3-ketoacyl-CoA reductase</fullName>
        <shortName evidence="4">3-ketoreductase</shortName>
        <shortName evidence="4">KAR</shortName>
    </alternativeName>
    <alternativeName>
        <fullName evidence="4">Microsomal beta-keto-reductase</fullName>
    </alternativeName>
</protein>
<comment type="function">
    <text evidence="4">Component of the microsomal membrane bound fatty acid elongation system, which produces the 26-carbon very long-chain fatty acids (VLCFA) from palmitate. Catalyzes the reduction of the 3-ketoacyl-CoA intermediate that is formed in each cycle of fatty acid elongation. VLCFAs serve as precursors for ceramide and sphingolipids.</text>
</comment>
<comment type="catalytic activity">
    <reaction evidence="4">
        <text>a very-long-chain (3R)-3-hydroxyacyl-CoA + NADP(+) = a very-long-chain 3-oxoacyl-CoA + NADPH + H(+)</text>
        <dbReference type="Rhea" id="RHEA:48680"/>
        <dbReference type="ChEBI" id="CHEBI:15378"/>
        <dbReference type="ChEBI" id="CHEBI:57783"/>
        <dbReference type="ChEBI" id="CHEBI:58349"/>
        <dbReference type="ChEBI" id="CHEBI:85440"/>
        <dbReference type="ChEBI" id="CHEBI:90725"/>
        <dbReference type="EC" id="1.1.1.330"/>
    </reaction>
</comment>
<comment type="pathway">
    <text evidence="3">Lipid metabolism; fatty acid biosynthesis.</text>
</comment>
<comment type="subcellular location">
    <subcellularLocation>
        <location evidence="4">Endoplasmic reticulum membrane</location>
        <topology evidence="4">Single-pass membrane protein</topology>
    </subcellularLocation>
</comment>
<comment type="similarity">
    <text evidence="4">Belongs to the short-chain dehydrogenases/reductases (SDR) family.</text>
</comment>